<protein>
    <recommendedName>
        <fullName evidence="4">NAD(P)H oxidoreductase RTN4IP1, mitochondrial</fullName>
        <ecNumber evidence="1">1.6.5.-</ecNumber>
    </recommendedName>
    <alternativeName>
        <fullName>Reticulon-4-interacting protein 1</fullName>
    </alternativeName>
</protein>
<dbReference type="EC" id="1.6.5.-" evidence="1"/>
<dbReference type="EMBL" id="BC120354">
    <property type="protein sequence ID" value="AAI20355.1"/>
    <property type="molecule type" value="mRNA"/>
</dbReference>
<dbReference type="RefSeq" id="NP_001068743.1">
    <property type="nucleotide sequence ID" value="NM_001075275.1"/>
</dbReference>
<dbReference type="RefSeq" id="XP_005210889.1">
    <property type="nucleotide sequence ID" value="XM_005210832.4"/>
</dbReference>
<dbReference type="RefSeq" id="XP_005210890.1">
    <property type="nucleotide sequence ID" value="XM_005210833.5"/>
</dbReference>
<dbReference type="RefSeq" id="XP_010806762.1">
    <property type="nucleotide sequence ID" value="XM_010808460.2"/>
</dbReference>
<dbReference type="SMR" id="Q0VC50"/>
<dbReference type="FunCoup" id="Q0VC50">
    <property type="interactions" value="2180"/>
</dbReference>
<dbReference type="STRING" id="9913.ENSBTAP00000059531"/>
<dbReference type="PaxDb" id="9913-ENSBTAP00000023334"/>
<dbReference type="Ensembl" id="ENSBTAT00000023334.5">
    <property type="protein sequence ID" value="ENSBTAP00000023334.5"/>
    <property type="gene ID" value="ENSBTAG00000017554.5"/>
</dbReference>
<dbReference type="GeneID" id="506626"/>
<dbReference type="KEGG" id="bta:506626"/>
<dbReference type="CTD" id="84816"/>
<dbReference type="VEuPathDB" id="HostDB:ENSBTAG00000017554"/>
<dbReference type="VGNC" id="VGNC:34205">
    <property type="gene designation" value="RTN4IP1"/>
</dbReference>
<dbReference type="eggNOG" id="KOG1198">
    <property type="taxonomic scope" value="Eukaryota"/>
</dbReference>
<dbReference type="GeneTree" id="ENSGT00880000138028"/>
<dbReference type="HOGENOM" id="CLU_026673_3_3_1"/>
<dbReference type="InParanoid" id="Q0VC50"/>
<dbReference type="OMA" id="TSWQALK"/>
<dbReference type="OrthoDB" id="48317at2759"/>
<dbReference type="TreeFam" id="TF313919"/>
<dbReference type="UniPathway" id="UPA00232"/>
<dbReference type="Proteomes" id="UP000009136">
    <property type="component" value="Chromosome 9"/>
</dbReference>
<dbReference type="Bgee" id="ENSBTAG00000017554">
    <property type="expression patterns" value="Expressed in oocyte and 105 other cell types or tissues"/>
</dbReference>
<dbReference type="GO" id="GO:0005759">
    <property type="term" value="C:mitochondrial matrix"/>
    <property type="evidence" value="ECO:0007669"/>
    <property type="project" value="UniProtKB-SubCell"/>
</dbReference>
<dbReference type="GO" id="GO:0005741">
    <property type="term" value="C:mitochondrial outer membrane"/>
    <property type="evidence" value="ECO:0000250"/>
    <property type="project" value="UniProtKB"/>
</dbReference>
<dbReference type="GO" id="GO:0005739">
    <property type="term" value="C:mitochondrion"/>
    <property type="evidence" value="ECO:0000318"/>
    <property type="project" value="GO_Central"/>
</dbReference>
<dbReference type="GO" id="GO:0008753">
    <property type="term" value="F:NADPH dehydrogenase (quinone) activity"/>
    <property type="evidence" value="ECO:0007669"/>
    <property type="project" value="Ensembl"/>
</dbReference>
<dbReference type="GO" id="GO:0008270">
    <property type="term" value="F:zinc ion binding"/>
    <property type="evidence" value="ECO:0007669"/>
    <property type="project" value="InterPro"/>
</dbReference>
<dbReference type="GO" id="GO:0007399">
    <property type="term" value="P:nervous system development"/>
    <property type="evidence" value="ECO:0007669"/>
    <property type="project" value="UniProtKB-KW"/>
</dbReference>
<dbReference type="GO" id="GO:0050773">
    <property type="term" value="P:regulation of dendrite development"/>
    <property type="evidence" value="ECO:0000250"/>
    <property type="project" value="UniProtKB"/>
</dbReference>
<dbReference type="GO" id="GO:0006744">
    <property type="term" value="P:ubiquinone biosynthetic process"/>
    <property type="evidence" value="ECO:0007669"/>
    <property type="project" value="Ensembl"/>
</dbReference>
<dbReference type="CDD" id="cd08248">
    <property type="entry name" value="RTN4I1"/>
    <property type="match status" value="1"/>
</dbReference>
<dbReference type="FunFam" id="3.40.50.720:FF:000147">
    <property type="entry name" value="Reticulon-4-interacting protein 1 homolog, mitochondrial"/>
    <property type="match status" value="1"/>
</dbReference>
<dbReference type="FunFam" id="3.90.180.10:FF:000009">
    <property type="entry name" value="Reticulon-4-interacting protein 1, mitochondrial"/>
    <property type="match status" value="1"/>
</dbReference>
<dbReference type="Gene3D" id="3.90.180.10">
    <property type="entry name" value="Medium-chain alcohol dehydrogenases, catalytic domain"/>
    <property type="match status" value="1"/>
</dbReference>
<dbReference type="Gene3D" id="3.40.50.720">
    <property type="entry name" value="NAD(P)-binding Rossmann-like Domain"/>
    <property type="match status" value="1"/>
</dbReference>
<dbReference type="InterPro" id="IPR013154">
    <property type="entry name" value="ADH-like_N"/>
</dbReference>
<dbReference type="InterPro" id="IPR011032">
    <property type="entry name" value="GroES-like_sf"/>
</dbReference>
<dbReference type="InterPro" id="IPR036291">
    <property type="entry name" value="NAD(P)-bd_dom_sf"/>
</dbReference>
<dbReference type="InterPro" id="IPR020843">
    <property type="entry name" value="PKS_ER"/>
</dbReference>
<dbReference type="InterPro" id="IPR002364">
    <property type="entry name" value="Quin_OxRdtase/zeta-crystal_CS"/>
</dbReference>
<dbReference type="InterPro" id="IPR037397">
    <property type="entry name" value="RTN4I1"/>
</dbReference>
<dbReference type="InterPro" id="IPR050700">
    <property type="entry name" value="YIM1/Zinc_Alcohol_DH_Fams"/>
</dbReference>
<dbReference type="PANTHER" id="PTHR11695">
    <property type="entry name" value="ALCOHOL DEHYDROGENASE RELATED"/>
    <property type="match status" value="1"/>
</dbReference>
<dbReference type="PANTHER" id="PTHR11695:SF294">
    <property type="entry name" value="RETICULON-4-INTERACTING PROTEIN 1, MITOCHONDRIAL"/>
    <property type="match status" value="1"/>
</dbReference>
<dbReference type="Pfam" id="PF08240">
    <property type="entry name" value="ADH_N"/>
    <property type="match status" value="1"/>
</dbReference>
<dbReference type="Pfam" id="PF13602">
    <property type="entry name" value="ADH_zinc_N_2"/>
    <property type="match status" value="1"/>
</dbReference>
<dbReference type="SMART" id="SM00829">
    <property type="entry name" value="PKS_ER"/>
    <property type="match status" value="1"/>
</dbReference>
<dbReference type="SUPFAM" id="SSF50129">
    <property type="entry name" value="GroES-like"/>
    <property type="match status" value="1"/>
</dbReference>
<dbReference type="SUPFAM" id="SSF51735">
    <property type="entry name" value="NAD(P)-binding Rossmann-fold domains"/>
    <property type="match status" value="1"/>
</dbReference>
<dbReference type="PROSITE" id="PS01162">
    <property type="entry name" value="QOR_ZETA_CRYSTAL"/>
    <property type="match status" value="1"/>
</dbReference>
<proteinExistence type="evidence at transcript level"/>
<accession>Q0VC50</accession>
<comment type="function">
    <text evidence="1 2">NAD(P)H oxidoreductase involved in the ubiquinone biosynthetic pathway. Required for the O-methyltransferase activity of COQ3 (By similarity). Able to catalyze the oxidoreduction of 3-demethylubiquinone into 3-demethylubiquinol in vitro (By similarity). However, it is unclear if 3-demethylubiquinone constitutes a substrate in vivo (By similarity). May also play a role in the regulation of retinal ganglion cell (RGC) neurite outgrowth, and hence in the development of the inner retina and optic nerve. Appears to be a potent inhibitor of regeneration following spinal cord injury (By similarity).</text>
</comment>
<comment type="catalytic activity">
    <reaction evidence="1">
        <text>a 3-demethylubiquinone + NADH + 2 H(+) = a 3-demethylubiquinol + NAD(+)</text>
        <dbReference type="Rhea" id="RHEA:83235"/>
        <dbReference type="Rhea" id="RHEA-COMP:10914"/>
        <dbReference type="Rhea" id="RHEA-COMP:19654"/>
        <dbReference type="ChEBI" id="CHEBI:15378"/>
        <dbReference type="ChEBI" id="CHEBI:57540"/>
        <dbReference type="ChEBI" id="CHEBI:57945"/>
        <dbReference type="ChEBI" id="CHEBI:84422"/>
        <dbReference type="ChEBI" id="CHEBI:231825"/>
    </reaction>
</comment>
<comment type="catalytic activity">
    <reaction evidence="1">
        <text>a 3-demethylubiquinone + NADPH + 2 H(+) = a 3-demethylubiquinol + NADP(+)</text>
        <dbReference type="Rhea" id="RHEA:83239"/>
        <dbReference type="Rhea" id="RHEA-COMP:10914"/>
        <dbReference type="Rhea" id="RHEA-COMP:19654"/>
        <dbReference type="ChEBI" id="CHEBI:15378"/>
        <dbReference type="ChEBI" id="CHEBI:57783"/>
        <dbReference type="ChEBI" id="CHEBI:58349"/>
        <dbReference type="ChEBI" id="CHEBI:84422"/>
        <dbReference type="ChEBI" id="CHEBI:231825"/>
    </reaction>
</comment>
<comment type="catalytic activity">
    <reaction evidence="1">
        <text>3-demethylubiquinone-10 + NADH + 2 H(+) = 3-demethylubiquinol-10 + NAD(+)</text>
        <dbReference type="Rhea" id="RHEA:83243"/>
        <dbReference type="ChEBI" id="CHEBI:15378"/>
        <dbReference type="ChEBI" id="CHEBI:57540"/>
        <dbReference type="ChEBI" id="CHEBI:57945"/>
        <dbReference type="ChEBI" id="CHEBI:64182"/>
        <dbReference type="ChEBI" id="CHEBI:231824"/>
    </reaction>
</comment>
<comment type="catalytic activity">
    <reaction evidence="1">
        <text>3-demethylubiquinone-10 + NADPH + 2 H(+) = 3-demethylubiquinol-10 + NADP(+)</text>
        <dbReference type="Rhea" id="RHEA:83247"/>
        <dbReference type="ChEBI" id="CHEBI:15378"/>
        <dbReference type="ChEBI" id="CHEBI:57783"/>
        <dbReference type="ChEBI" id="CHEBI:58349"/>
        <dbReference type="ChEBI" id="CHEBI:64182"/>
        <dbReference type="ChEBI" id="CHEBI:231824"/>
    </reaction>
</comment>
<comment type="pathway">
    <text evidence="1">Cofactor biosynthesis; ubiquinone biosynthesis.</text>
</comment>
<comment type="subunit">
    <text evidence="2">Interacts with RTN4, UQCRC1 and UQCRC2.</text>
</comment>
<comment type="subcellular location">
    <subcellularLocation>
        <location evidence="1">Mitochondrion matrix</location>
    </subcellularLocation>
    <subcellularLocation>
        <location evidence="1">Mitochondrion outer membrane</location>
    </subcellularLocation>
    <text evidence="1">Mainly localizes to the mitochondrial matrix. Also colocalizes with the endoplasmic reticulum HSPA5 at spots corresponding to contacts with mitochondria.</text>
</comment>
<comment type="similarity">
    <text evidence="4">Belongs to the zinc-containing alcohol dehydrogenase family. Quinone oxidoreductase subfamily.</text>
</comment>
<organism>
    <name type="scientific">Bos taurus</name>
    <name type="common">Bovine</name>
    <dbReference type="NCBI Taxonomy" id="9913"/>
    <lineage>
        <taxon>Eukaryota</taxon>
        <taxon>Metazoa</taxon>
        <taxon>Chordata</taxon>
        <taxon>Craniata</taxon>
        <taxon>Vertebrata</taxon>
        <taxon>Euteleostomi</taxon>
        <taxon>Mammalia</taxon>
        <taxon>Eutheria</taxon>
        <taxon>Laurasiatheria</taxon>
        <taxon>Artiodactyla</taxon>
        <taxon>Ruminantia</taxon>
        <taxon>Pecora</taxon>
        <taxon>Bovidae</taxon>
        <taxon>Bovinae</taxon>
        <taxon>Bos</taxon>
    </lineage>
</organism>
<keyword id="KW-0472">Membrane</keyword>
<keyword id="KW-0496">Mitochondrion</keyword>
<keyword id="KW-1000">Mitochondrion outer membrane</keyword>
<keyword id="KW-0521">NADP</keyword>
<keyword id="KW-0524">Neurogenesis</keyword>
<keyword id="KW-0547">Nucleotide-binding</keyword>
<keyword id="KW-0560">Oxidoreductase</keyword>
<keyword id="KW-1185">Reference proteome</keyword>
<keyword id="KW-0809">Transit peptide</keyword>
<keyword id="KW-0831">Ubiquinone biosynthesis</keyword>
<evidence type="ECO:0000250" key="1">
    <source>
        <dbReference type="UniProtKB" id="Q8WWV3"/>
    </source>
</evidence>
<evidence type="ECO:0000250" key="2">
    <source>
        <dbReference type="UniProtKB" id="Q924D0"/>
    </source>
</evidence>
<evidence type="ECO:0000255" key="3"/>
<evidence type="ECO:0000305" key="4"/>
<name>RT4I1_BOVIN</name>
<gene>
    <name type="primary">RTN4IP1</name>
</gene>
<feature type="transit peptide" description="Mitochondrion" evidence="3">
    <location>
        <begin position="1"/>
        <end position="40"/>
    </location>
</feature>
<feature type="chain" id="PRO_0000327931" description="NAD(P)H oxidoreductase RTN4IP1, mitochondrial">
    <location>
        <begin position="41"/>
        <end position="396"/>
    </location>
</feature>
<feature type="domain" description="Enoyl reductase (ER)" evidence="3">
    <location>
        <begin position="52"/>
        <end position="393"/>
    </location>
</feature>
<feature type="binding site" evidence="1">
    <location>
        <position position="214"/>
    </location>
    <ligand>
        <name>NADPH</name>
        <dbReference type="ChEBI" id="CHEBI:57783"/>
    </ligand>
</feature>
<feature type="binding site" evidence="1">
    <location>
        <position position="216"/>
    </location>
    <ligand>
        <name>NADPH</name>
        <dbReference type="ChEBI" id="CHEBI:57783"/>
    </ligand>
</feature>
<feature type="binding site" evidence="1">
    <location>
        <position position="217"/>
    </location>
    <ligand>
        <name>NADPH</name>
        <dbReference type="ChEBI" id="CHEBI:57783"/>
    </ligand>
</feature>
<feature type="binding site" evidence="1">
    <location>
        <position position="237"/>
    </location>
    <ligand>
        <name>NADPH</name>
        <dbReference type="ChEBI" id="CHEBI:57783"/>
    </ligand>
</feature>
<feature type="binding site" evidence="1">
    <location>
        <position position="255"/>
    </location>
    <ligand>
        <name>NADPH</name>
        <dbReference type="ChEBI" id="CHEBI:57783"/>
    </ligand>
</feature>
<feature type="binding site" evidence="1">
    <location>
        <position position="276"/>
    </location>
    <ligand>
        <name>NADPH</name>
        <dbReference type="ChEBI" id="CHEBI:57783"/>
    </ligand>
</feature>
<feature type="binding site" evidence="1">
    <location>
        <position position="300"/>
    </location>
    <ligand>
        <name>NADPH</name>
        <dbReference type="ChEBI" id="CHEBI:57783"/>
    </ligand>
</feature>
<feature type="binding site" evidence="1">
    <location>
        <position position="341"/>
    </location>
    <ligand>
        <name>NADPH</name>
        <dbReference type="ChEBI" id="CHEBI:57783"/>
    </ligand>
</feature>
<feature type="binding site" evidence="1">
    <location>
        <position position="343"/>
    </location>
    <ligand>
        <name>NADPH</name>
        <dbReference type="ChEBI" id="CHEBI:57783"/>
    </ligand>
</feature>
<feature type="binding site" evidence="1">
    <location>
        <position position="386"/>
    </location>
    <ligand>
        <name>NADPH</name>
        <dbReference type="ChEBI" id="CHEBI:57783"/>
    </ligand>
</feature>
<feature type="binding site" evidence="1">
    <location>
        <position position="387"/>
    </location>
    <ligand>
        <name>NADPH</name>
        <dbReference type="ChEBI" id="CHEBI:57783"/>
    </ligand>
</feature>
<feature type="binding site" evidence="1">
    <location>
        <position position="388"/>
    </location>
    <ligand>
        <name>NADPH</name>
        <dbReference type="ChEBI" id="CHEBI:57783"/>
    </ligand>
</feature>
<sequence>MGFLKTCVFRRNACTAVCFWRSQVVQKPSVRKISTTSPRSTVMPAWVIDKYGSNEVLRFTQNMMIPMIHYPNEVIIKVHAASINPIDVNMRSGYGATALNMKRDPLHVKIKGEEFPLTLGRDVSGVVMECGLDVRYFKPGDEVWAAVPPWKQGTLSEFVVVSGNEVSHKPRSLTHTQAASLPYVALTAWSAINKVGGLNDRNCTGKRVLILGASGGVGTFAIQVMKAWDAHVTAVCSQDASELVRKLGADDVIDYKSGNVEAQLKSSKPFDFILDNVGGSTETWALKFLKKWSGATYVTLVTPFLLNMDRLGIADGMLQTGVTVGSKTLKHFWQGVHYRWAFFMASGPCLDDIAELVEAGKIQPVIEKTFPFSKVPEAFLKVERGHARGKTVINVV</sequence>
<reference key="1">
    <citation type="submission" date="2006-08" db="EMBL/GenBank/DDBJ databases">
        <authorList>
            <consortium name="NIH - Mammalian Gene Collection (MGC) project"/>
        </authorList>
    </citation>
    <scope>NUCLEOTIDE SEQUENCE [LARGE SCALE MRNA]</scope>
    <source>
        <strain>Hereford</strain>
        <tissue>Fetal skin</tissue>
    </source>
</reference>